<feature type="chain" id="PRO_0000117789" description="NADH-ubiquinone oxidoreductase chain 3">
    <location>
        <begin position="1"/>
        <end position="115"/>
    </location>
</feature>
<feature type="transmembrane region" description="Helical" evidence="3">
    <location>
        <begin position="3"/>
        <end position="23"/>
    </location>
</feature>
<feature type="transmembrane region" description="Helical" evidence="3">
    <location>
        <begin position="55"/>
        <end position="75"/>
    </location>
</feature>
<feature type="transmembrane region" description="Helical" evidence="3">
    <location>
        <begin position="84"/>
        <end position="104"/>
    </location>
</feature>
<protein>
    <recommendedName>
        <fullName evidence="1">NADH-ubiquinone oxidoreductase chain 3</fullName>
        <ecNumber evidence="1">7.1.1.2</ecNumber>
    </recommendedName>
    <alternativeName>
        <fullName>NADH dehydrogenase subunit 3</fullName>
    </alternativeName>
</protein>
<name>NU3M_PAPHA</name>
<gene>
    <name evidence="1" type="primary">MT-ND3</name>
    <name type="synonym">MTND3</name>
    <name type="synonym">NADH3</name>
    <name type="synonym">ND3</name>
</gene>
<proteinExistence type="inferred from homology"/>
<sequence length="115" mass="13105">MNLMLALTVNTLLTALLTIIMFWLPQLNSYAEKANPYECGFDPLNPARIPFSMKFFLVAITFLLFDLEIALLLSLPWALQTANLPTMIKTSIMFITILALSLAYEWTQKGLDWTE</sequence>
<comment type="function">
    <text evidence="1">Core subunit of the mitochondrial membrane respiratory chain NADH dehydrogenase (Complex I) which catalyzes electron transfer from NADH through the respiratory chain, using ubiquinone as an electron acceptor. Essential for the catalytic activity of complex I.</text>
</comment>
<comment type="catalytic activity">
    <reaction evidence="1">
        <text>a ubiquinone + NADH + 5 H(+)(in) = a ubiquinol + NAD(+) + 4 H(+)(out)</text>
        <dbReference type="Rhea" id="RHEA:29091"/>
        <dbReference type="Rhea" id="RHEA-COMP:9565"/>
        <dbReference type="Rhea" id="RHEA-COMP:9566"/>
        <dbReference type="ChEBI" id="CHEBI:15378"/>
        <dbReference type="ChEBI" id="CHEBI:16389"/>
        <dbReference type="ChEBI" id="CHEBI:17976"/>
        <dbReference type="ChEBI" id="CHEBI:57540"/>
        <dbReference type="ChEBI" id="CHEBI:57945"/>
        <dbReference type="EC" id="7.1.1.2"/>
    </reaction>
</comment>
<comment type="subunit">
    <text evidence="1">Core subunit of respiratory chain NADH dehydrogenase (Complex I) which is composed of 45 different subunits. Interacts with TMEM186. Interacts with TMEM242 (By similarity).</text>
</comment>
<comment type="subcellular location">
    <subcellularLocation>
        <location evidence="2">Mitochondrion inner membrane</location>
        <topology evidence="3">Multi-pass membrane protein</topology>
    </subcellularLocation>
</comment>
<comment type="similarity">
    <text evidence="4">Belongs to the complex I subunit 3 family.</text>
</comment>
<accession>Q9ZXX7</accession>
<organism>
    <name type="scientific">Papio hamadryas</name>
    <name type="common">Hamadryas baboon</name>
    <dbReference type="NCBI Taxonomy" id="9557"/>
    <lineage>
        <taxon>Eukaryota</taxon>
        <taxon>Metazoa</taxon>
        <taxon>Chordata</taxon>
        <taxon>Craniata</taxon>
        <taxon>Vertebrata</taxon>
        <taxon>Euteleostomi</taxon>
        <taxon>Mammalia</taxon>
        <taxon>Eutheria</taxon>
        <taxon>Euarchontoglires</taxon>
        <taxon>Primates</taxon>
        <taxon>Haplorrhini</taxon>
        <taxon>Catarrhini</taxon>
        <taxon>Cercopithecidae</taxon>
        <taxon>Cercopithecinae</taxon>
        <taxon>Papio</taxon>
    </lineage>
</organism>
<reference key="1">
    <citation type="journal article" date="1998" name="J. Mol. Evol.">
        <title>Molecular timing of primate divergences as estimated by two nonprimate calibration points.</title>
        <authorList>
            <person name="Arnason U."/>
            <person name="Gullberg A."/>
            <person name="Janke A."/>
        </authorList>
    </citation>
    <scope>NUCLEOTIDE SEQUENCE [GENOMIC DNA]</scope>
</reference>
<dbReference type="EC" id="7.1.1.2" evidence="1"/>
<dbReference type="EMBL" id="Y18001">
    <property type="protein sequence ID" value="CAA77001.1"/>
    <property type="status" value="ALT_TERM"/>
    <property type="molecule type" value="Genomic_DNA"/>
</dbReference>
<dbReference type="PIR" id="T11513">
    <property type="entry name" value="T11513"/>
</dbReference>
<dbReference type="RefSeq" id="NP_008465.1">
    <property type="nucleotide sequence ID" value="NC_001992.1"/>
</dbReference>
<dbReference type="SMR" id="Q9ZXX7"/>
<dbReference type="GeneID" id="808323"/>
<dbReference type="CTD" id="4537"/>
<dbReference type="GO" id="GO:0005743">
    <property type="term" value="C:mitochondrial inner membrane"/>
    <property type="evidence" value="ECO:0000250"/>
    <property type="project" value="UniProtKB"/>
</dbReference>
<dbReference type="GO" id="GO:0030964">
    <property type="term" value="C:NADH dehydrogenase complex"/>
    <property type="evidence" value="ECO:0007669"/>
    <property type="project" value="TreeGrafter"/>
</dbReference>
<dbReference type="GO" id="GO:0008137">
    <property type="term" value="F:NADH dehydrogenase (ubiquinone) activity"/>
    <property type="evidence" value="ECO:0000250"/>
    <property type="project" value="UniProtKB"/>
</dbReference>
<dbReference type="GO" id="GO:0006120">
    <property type="term" value="P:mitochondrial electron transport, NADH to ubiquinone"/>
    <property type="evidence" value="ECO:0000250"/>
    <property type="project" value="UniProtKB"/>
</dbReference>
<dbReference type="FunFam" id="1.20.58.1610:FF:000004">
    <property type="entry name" value="NADH-quinone oxidoreductase subunit A"/>
    <property type="match status" value="1"/>
</dbReference>
<dbReference type="Gene3D" id="1.20.58.1610">
    <property type="entry name" value="NADH:ubiquinone/plastoquinone oxidoreductase, chain 3"/>
    <property type="match status" value="1"/>
</dbReference>
<dbReference type="InterPro" id="IPR000440">
    <property type="entry name" value="NADH_UbQ/plastoQ_OxRdtase_su3"/>
</dbReference>
<dbReference type="InterPro" id="IPR038430">
    <property type="entry name" value="NDAH_ubi_oxred_su3_sf"/>
</dbReference>
<dbReference type="PANTHER" id="PTHR11058">
    <property type="entry name" value="NADH-UBIQUINONE OXIDOREDUCTASE CHAIN 3"/>
    <property type="match status" value="1"/>
</dbReference>
<dbReference type="PANTHER" id="PTHR11058:SF9">
    <property type="entry name" value="NADH-UBIQUINONE OXIDOREDUCTASE CHAIN 3"/>
    <property type="match status" value="1"/>
</dbReference>
<dbReference type="Pfam" id="PF00507">
    <property type="entry name" value="Oxidored_q4"/>
    <property type="match status" value="1"/>
</dbReference>
<keyword id="KW-0249">Electron transport</keyword>
<keyword id="KW-0472">Membrane</keyword>
<keyword id="KW-0496">Mitochondrion</keyword>
<keyword id="KW-0999">Mitochondrion inner membrane</keyword>
<keyword id="KW-0520">NAD</keyword>
<keyword id="KW-0679">Respiratory chain</keyword>
<keyword id="KW-1278">Translocase</keyword>
<keyword id="KW-0812">Transmembrane</keyword>
<keyword id="KW-1133">Transmembrane helix</keyword>
<keyword id="KW-0813">Transport</keyword>
<keyword id="KW-0830">Ubiquinone</keyword>
<geneLocation type="mitochondrion"/>
<evidence type="ECO:0000250" key="1">
    <source>
        <dbReference type="UniProtKB" id="P03897"/>
    </source>
</evidence>
<evidence type="ECO:0000250" key="2">
    <source>
        <dbReference type="UniProtKB" id="P03898"/>
    </source>
</evidence>
<evidence type="ECO:0000255" key="3"/>
<evidence type="ECO:0000305" key="4"/>